<comment type="function">
    <text evidence="2 10 11 12 14 15 17">E3 ubiquitin-protein ligase that mediates ubiquitination of p53/TP53, leading to its degradation by the proteasome (PubMed:15195100, PubMed:21804542). Inhibits p53/TP53- and p73/TP73-mediated cell cycle arrest and apoptosis by binding its transcriptional activation domain (By similarity). Also acts as a ubiquitin ligase E3 toward itself, ARRB1 and ARBB2 (PubMed:11588219). Permits the nuclear export of p53/TP53 (By similarity). Promotes proteasome-dependent ubiquitin-independent degradation of retinoblastoma RB1 protein (By similarity). Inhibits DAXX-mediated apoptosis by inducing its ubiquitination and degradation (By similarity). Component of the TRIM28/KAP1-MDM2-p53/TP53 complex involved in stabilizing p53/TP53 (By similarity). Also a component of the TRIM28/KAP1-ERBB4-MDM2 complex which links growth factor and DNA damage response pathways (By similarity). Mediates ubiquitination and subsequent proteasome degradation of DYRK2 in nucleus (By similarity). Ubiquitinates IGF1R and SNAI1 and promotes them to proteasomal degradation (By similarity). Ubiquitinates DCX, leading to DCX degradation and reduction of the dendritic spine density of olfactory bulb granule cells (PubMed:25088421). Ubiquitinates DLG4, leading to proteasomal degradation of DLG4 which is required for AMPA receptor endocytosis (PubMed:14642282). Negatively regulates NDUFS1, leading to decreased mitochondrial respiration, marked oxidative stress, and commitment to the mitochondrial pathway of apoptosis (PubMed:30879903). Binds NDUFS1 leading to its cytosolic retention rather than mitochondrial localization resulting in decreased supercomplex assembly (interactions between complex I and complex III), decreased complex I activity, ROS production, and apoptosis (PubMed:30879903).</text>
</comment>
<comment type="catalytic activity">
    <reaction evidence="11">
        <text>S-ubiquitinyl-[E2 ubiquitin-conjugating enzyme]-L-cysteine + [acceptor protein]-L-lysine = [E2 ubiquitin-conjugating enzyme]-L-cysteine + N(6)-ubiquitinyl-[acceptor protein]-L-lysine.</text>
        <dbReference type="EC" id="2.3.2.27"/>
    </reaction>
</comment>
<comment type="subunit">
    <text evidence="2 9 10 12 13 14 16 17">Interacts with p53/TP53, TP73/p73, RBL5 and RP11. Binds specifically to RNA. Can interact with RB1, E1A-associated protein EP300 and the E2F1 transcription factor. Forms a ternary complex with p53/TP53 and WWOX. Interacts with CDKN2AIP, RFWD3, USP7, PYHIN1 and RBBP6. Interacts with ARRB1 and ARRB2. Interacts with PSMA3. Found in a trimeric complex with MDM2, MDM4 and USP2. Interacts with USP2 (via N-terminus and C-terminus). Interacts with MDM4. Part of a complex with MDM2, DAXX, RASSF1 and USP7. Part of a complex with DAXX, MDM2 and USP7. Interacts directly with DAXX and USP7. Interacts (via C-terminus) with RASSF1 isoform A (via N-terminus); the interaction is independent of TP53. Interacts with APEX1; leading to its ubiquitination and degradation. Interacts with RYBP; this inhibits ubiquitination of TP53. Identified in a complex with RYBP and p53/TP53. Also a component of the TRIM28/KAP1-MDM2-p53/TP53 complex involved in regulating p53/TP53 stabilization and activity. Binds directly both p53/TP53 and TRIM28. Component of the TRIM28/KAP1-ERBB4-MDM2 complex involved in connecting growth factor responses with DNA damage. Interacts directly with both TRIM28 and ERBB4 in the complex. Interacts with DYRK2. Interacts with IGF1R. Interacts with TRIM13; the interaction ubiquitinates MDM2 leading to its proteasomal degradation. Interacts with SNAI1; this interaction promotes SNAI1 ubiquitination. Interacts with NOTCH1 (via intracellular domain). Interacts with FHIT. Interacts with RFFL and RNF34; the interaction stabilizes MDM2. Interacts with CDK5RAP3 and CDKN2A/ARF; form a ternary complex involved in regulation of p53/TP53. Interacts with MTA1 (By similarity). Interacts with AARB2 (PubMed:11588219). Interacts with MTBP (PubMed:10906133). Interacts with PML (PubMed:15195100). Interacts with TBRG1 (PubMed:17110379). Interacts (via its RanBP2-type zinc finger domain) with RPL11 in the 5S RNP complex composed of 5S RNA, RPL5 and RPL11; this interaction occurs in the nucleoplasm and negatively regulates MDM2-mediated TP53 ubiquitination and degradation (PubMed:15195100, PubMed:21804542). Interacts with ADGRB1; the interaction results in inhibition of MDM2-mediated ubiquitination and degradation of DLG4/PSD95, promoting DLG4 stability and regulating synaptic plasticity (PubMed:25751059). Interacts with RPL23A; this interaction may promote p53/TP53 polyubiquitination (By similarity). Interacts with NDUFS1 (PubMed:30879903). Interacts with MORN3; the interaction enhances the ubiquitination of p53/TP53 (By similarity).</text>
</comment>
<comment type="interaction">
    <interactant intactId="EBI-641788">
        <id>P23804</id>
    </interactant>
    <interactant intactId="EBI-641778">
        <id>Q8BWG8</id>
        <label>Arrb1</label>
    </interactant>
    <organismsDiffer>false</organismsDiffer>
    <experiments>4</experiments>
</comment>
<comment type="interaction">
    <interactant intactId="EBI-641788">
        <id>P23804</id>
    </interactant>
    <interactant intactId="EBI-300895">
        <id>Q62108</id>
        <label>Dlg4</label>
    </interactant>
    <organismsDiffer>false</organismsDiffer>
    <experiments>3</experiments>
</comment>
<comment type="interaction">
    <interactant intactId="EBI-641788">
        <id>P23804</id>
    </interactant>
    <interactant intactId="EBI-692945">
        <id>O88904</id>
        <label>Hipk1</label>
    </interactant>
    <organismsDiffer>false</organismsDiffer>
    <experiments>3</experiments>
</comment>
<comment type="interaction">
    <interactant intactId="EBI-641788">
        <id>P23804</id>
    </interactant>
    <interactant intactId="EBI-960530">
        <id>Q5EBH1</id>
        <label>Rassf5</label>
    </interactant>
    <organismsDiffer>false</organismsDiffer>
    <experiments>3</experiments>
</comment>
<comment type="interaction">
    <interactant intactId="EBI-641788">
        <id>P23804</id>
    </interactant>
    <interactant intactId="EBI-1548890">
        <id>Q9CXW4</id>
        <label>Rpl11</label>
    </interactant>
    <organismsDiffer>false</organismsDiffer>
    <experiments>4</experiments>
</comment>
<comment type="interaction">
    <interactant intactId="EBI-641788">
        <id>P23804</id>
    </interactant>
    <interactant intactId="EBI-2365752">
        <id>P62830</id>
        <label>Rpl23</label>
    </interactant>
    <organismsDiffer>false</organismsDiffer>
    <experiments>2</experiments>
</comment>
<comment type="interaction">
    <interactant intactId="EBI-641788">
        <id>P23804</id>
    </interactant>
    <interactant intactId="EBI-773940">
        <id>P47962</id>
        <label>Rpl5</label>
    </interactant>
    <organismsDiffer>false</organismsDiffer>
    <experiments>3</experiments>
</comment>
<comment type="interaction">
    <interactant intactId="EBI-641788">
        <id>P23804</id>
    </interactant>
    <interactant intactId="EBI-646423">
        <id>Q8BSK8</id>
        <label>Rps6kb1</label>
    </interactant>
    <organismsDiffer>false</organismsDiffer>
    <experiments>2</experiments>
</comment>
<comment type="interaction">
    <interactant intactId="EBI-641788">
        <id>P23804</id>
    </interactant>
    <interactant intactId="EBI-474016">
        <id>P02340</id>
        <label>Tp53</label>
    </interactant>
    <organismsDiffer>false</organismsDiffer>
    <experiments>9</experiments>
</comment>
<comment type="interaction">
    <interactant intactId="EBI-641788">
        <id>P23804</id>
    </interactant>
    <interactant intactId="EBI-413074">
        <id>P62991</id>
        <label>Ubc</label>
    </interactant>
    <organismsDiffer>false</organismsDiffer>
    <experiments>2</experiments>
</comment>
<comment type="interaction">
    <interactant intactId="EBI-641788">
        <id>P23804</id>
    </interactant>
    <interactant intactId="EBI-476768">
        <id>P53350</id>
        <label>PLK1</label>
    </interactant>
    <organismsDiffer>true</organismsDiffer>
    <experiments>2</experiments>
</comment>
<comment type="interaction">
    <interactant intactId="EBI-3386476">
        <id>P23804-1</id>
    </interactant>
    <interactant intactId="EBI-2603376">
        <id>O35618</id>
        <label>Mdm4</label>
    </interactant>
    <organismsDiffer>false</organismsDiffer>
    <experiments>2</experiments>
</comment>
<comment type="interaction">
    <interactant intactId="EBI-3386476">
        <id>P23804-1</id>
    </interactant>
    <interactant intactId="EBI-474016">
        <id>P02340</id>
        <label>Tp53</label>
    </interactant>
    <organismsDiffer>false</organismsDiffer>
    <experiments>2</experiments>
</comment>
<comment type="interaction">
    <interactant intactId="EBI-3386480">
        <id>P23804-2</id>
    </interactant>
    <interactant intactId="EBI-2603376">
        <id>O35618</id>
        <label>Mdm4</label>
    </interactant>
    <organismsDiffer>false</organismsDiffer>
    <experiments>2</experiments>
</comment>
<comment type="subcellular location">
    <subcellularLocation>
        <location evidence="12 14">Nucleus</location>
        <location evidence="12 14">Nucleoplasm</location>
    </subcellularLocation>
    <subcellularLocation>
        <location evidence="12">Cytoplasm</location>
    </subcellularLocation>
    <subcellularLocation>
        <location evidence="12">Nucleus</location>
        <location evidence="12">Nucleolus</location>
    </subcellularLocation>
    <subcellularLocation>
        <location evidence="2">Nucleus</location>
    </subcellularLocation>
    <text evidence="2">Colocalizes with RASSF1 isoform A in the nucleus (By similarity). Expressed predominantly in the nucleoplasm. Interaction with ARF(P14) results in the localization of both proteins to the nucleolus. The nucleolar localization signals in both ARF(P14) and MDM2 may be necessary to allow efficient nucleolar localization of both proteins.</text>
</comment>
<comment type="alternative products">
    <event type="alternative splicing"/>
    <event type="alternative initiation"/>
    <isoform>
        <id>P23804-1</id>
        <name>Mdm2-p90</name>
        <sequence type="displayed"/>
    </isoform>
    <isoform>
        <id>P23804-2</id>
        <name>Mdm2-p76</name>
        <sequence type="described" ref="VSP_003215"/>
    </isoform>
</comment>
<comment type="tissue specificity">
    <text evidence="8">Ubiquitously expressed at low-level throughout embryo development and in adult tissues. MDM2-p90 is much more abundant than MDM2-p76 in testis, brain, heart, and kidney, but in the thymus, spleen, and intestine, the levels of the MDM2 proteins are roughly equivalent.</text>
</comment>
<comment type="induction">
    <text evidence="8 15">By UV light (PubMed:10075719). Down-regulated by NPAS4 (PubMed:25088421).</text>
</comment>
<comment type="domain">
    <text>Region I is sufficient for binding p53 and inhibiting its G1 arrest and apoptosis functions. It also binds p73 and E2F1. Region II contains most of a central acidic region required for interaction with ribosomal protein L5 and a putative C4-type zinc finger. The RING finger domain which coordinates two molecules of zinc interacts specifically with RNA whether or not zinc is present and mediates the heterooligomerization with MDM4. It is also essential for its ubiquitin ligase E3 activity toward p53 and itself.</text>
</comment>
<comment type="PTM">
    <text evidence="1">Phosphorylation on Ser-163 by SGK1 activates ubiquitination of p53/TP53. Phosphorylated at multiple sites near the RING domain by ATM upon DNA damage; this promotes its ubiquitination and degradation, preventing p53/TP53 degradation (By similarity).</text>
</comment>
<comment type="PTM">
    <text evidence="2">Autoubiquitination leads to proteasomal degradation; resulting in p53/TP53 activation it may be regulated by SFN. Also ubiquitinated by TRIM13. ATM-phosphorylated MDM2 is ubiquitinated by the SCF(FBXO31) complex in response to genotoxic stress, promoting its degradation and p53/TP53-mediated DNA damage response. Deubiquitinated by USP2 leads to its accumulation and increases deubiquitination and degradation of p53/TP53. Deubiquitinated by USP7 leading to its stabilization (By similarity).</text>
</comment>
<comment type="disruption phenotype">
    <text evidence="11">Loss of Dlg4 ubiquitination.</text>
</comment>
<comment type="miscellaneous">
    <molecule>Isoform Mdm2-p76</molecule>
    <text evidence="18">Does not bind to p53. Can be produced by alternative initiation at Met-50 of isoform Mdm2-p90, but is produced more efficiently by alternative splicing.</text>
</comment>
<comment type="similarity">
    <text evidence="18">Belongs to the MDM2/MDM4 family.</text>
</comment>
<gene>
    <name type="primary">Mdm2</name>
</gene>
<sequence>MCNTNMSVSTEGAASTSQIPASEQETLVRPKPLLLKLLKSVGAQNDTYTMKEIIFYIGQYIMTKRLYDEKQQHIVYCSNDLLGDVFGVPSFSVKEHRKIYAMIYRNLVAVSQQDSGTSLSESRRQPEGGSDLKDPLQAPPEEKPSSSDLISRLSTSSRRRSISETEENTDELPGERHRKRRRSLSFDPSLGLCELREMCSGGSSSSSSSSSESTETPSHQDLDDGVSEHSGDCLDQDSVSDQFSVEFEVESLDSEDYSLSDEGHELSDEDDEVYRVTVYQTGESDTDSFEGDPEISLADYWKCTSCNEMNPPLPSHCKRCWTLRENWLPDDKGKDKVEISEKAKLENSAQAEEGLDVPDGKKLTENDAKEPCAEEDSEEKAEQTPLSQESDDYSQPSTSSSIVYSSQESVKELKEETQDKDESVESSFSLNAIEPCVICQGRPKNGCIVHGKTGHLMSCFTCAKKLKKRNKPCPVCRQPIQMIVLTYFN</sequence>
<evidence type="ECO:0000250" key="1"/>
<evidence type="ECO:0000250" key="2">
    <source>
        <dbReference type="UniProtKB" id="Q00987"/>
    </source>
</evidence>
<evidence type="ECO:0000255" key="3"/>
<evidence type="ECO:0000255" key="4">
    <source>
        <dbReference type="PROSITE-ProRule" id="PRU00175"/>
    </source>
</evidence>
<evidence type="ECO:0000255" key="5">
    <source>
        <dbReference type="PROSITE-ProRule" id="PRU00322"/>
    </source>
</evidence>
<evidence type="ECO:0000255" key="6">
    <source>
        <dbReference type="PROSITE-ProRule" id="PRU01273"/>
    </source>
</evidence>
<evidence type="ECO:0000256" key="7">
    <source>
        <dbReference type="SAM" id="MobiDB-lite"/>
    </source>
</evidence>
<evidence type="ECO:0000269" key="8">
    <source>
    </source>
</evidence>
<evidence type="ECO:0000269" key="9">
    <source>
    </source>
</evidence>
<evidence type="ECO:0000269" key="10">
    <source>
    </source>
</evidence>
<evidence type="ECO:0000269" key="11">
    <source>
    </source>
</evidence>
<evidence type="ECO:0000269" key="12">
    <source>
    </source>
</evidence>
<evidence type="ECO:0000269" key="13">
    <source>
    </source>
</evidence>
<evidence type="ECO:0000269" key="14">
    <source>
    </source>
</evidence>
<evidence type="ECO:0000269" key="15">
    <source>
    </source>
</evidence>
<evidence type="ECO:0000269" key="16">
    <source>
    </source>
</evidence>
<evidence type="ECO:0000269" key="17">
    <source>
    </source>
</evidence>
<evidence type="ECO:0000305" key="18"/>
<evidence type="ECO:0007744" key="19">
    <source>
    </source>
</evidence>
<name>MDM2_MOUSE</name>
<reference key="1">
    <citation type="journal article" date="1991" name="EMBO J.">
        <title>Tumorigenic potential associated with enhanced expression of a gene that is amplified in a mouse tumor cell line.</title>
        <authorList>
            <person name="Fakharzadeh S.S."/>
            <person name="Trusko S.P."/>
            <person name="George D.L."/>
        </authorList>
    </citation>
    <scope>NUCLEOTIDE SEQUENCE [MRNA] (ISOFORM MDM2-P90)</scope>
</reference>
<reference key="2">
    <citation type="journal article" date="1996" name="Gene">
        <title>Genomic organization of the mouse double minute 2 gene.</title>
        <authorList>
            <person name="Jones S.N."/>
            <person name="Ansari-Lari M.A."/>
            <person name="Hancock A.R."/>
            <person name="Jones W.J."/>
            <person name="Gibbs R.A."/>
            <person name="Donehower L.A."/>
            <person name="Bradley A."/>
        </authorList>
    </citation>
    <scope>NUCLEOTIDE SEQUENCE [GENOMIC DNA] (ISOFORM MDM2-P90)</scope>
    <source>
        <strain>129/Sv</strain>
    </source>
</reference>
<reference key="3">
    <citation type="journal article" date="1996" name="Genomics">
        <title>The organization and expression of the mdm2 gene.</title>
        <authorList>
            <person name="de Oca Luna R.M."/>
            <person name="Tabor A.D."/>
            <person name="Eberspaecher H."/>
            <person name="Hulboy D.L."/>
            <person name="Worth L.L."/>
            <person name="Colman M.S."/>
            <person name="Finlay C.A."/>
            <person name="Lozano G."/>
        </authorList>
    </citation>
    <scope>NUCLEOTIDE SEQUENCE [GENOMIC DNA / MRNA] (ISOFORM MDM2-P90)</scope>
    <source>
        <strain>129/Sv</strain>
    </source>
</reference>
<reference key="4">
    <citation type="journal article" date="1999" name="J. Biol. Chem.">
        <title>Multiple murine double minute gene 2 (MDM2) proteins are induced by ultraviolet light.</title>
        <authorList>
            <person name="Saucedo L.J."/>
            <person name="Myers C.D."/>
            <person name="Perry M.E."/>
        </authorList>
    </citation>
    <scope>NUCLEOTIDE SEQUENCE (ISOFORMS MDM2-P90 AND MDM2-P76)</scope>
    <scope>TISSUE SPECIFICITY</scope>
    <scope>INDUCTION</scope>
</reference>
<reference key="5">
    <citation type="journal article" date="2005" name="Science">
        <title>The transcriptional landscape of the mammalian genome.</title>
        <authorList>
            <person name="Carninci P."/>
            <person name="Kasukawa T."/>
            <person name="Katayama S."/>
            <person name="Gough J."/>
            <person name="Frith M.C."/>
            <person name="Maeda N."/>
            <person name="Oyama R."/>
            <person name="Ravasi T."/>
            <person name="Lenhard B."/>
            <person name="Wells C."/>
            <person name="Kodzius R."/>
            <person name="Shimokawa K."/>
            <person name="Bajic V.B."/>
            <person name="Brenner S.E."/>
            <person name="Batalov S."/>
            <person name="Forrest A.R."/>
            <person name="Zavolan M."/>
            <person name="Davis M.J."/>
            <person name="Wilming L.G."/>
            <person name="Aidinis V."/>
            <person name="Allen J.E."/>
            <person name="Ambesi-Impiombato A."/>
            <person name="Apweiler R."/>
            <person name="Aturaliya R.N."/>
            <person name="Bailey T.L."/>
            <person name="Bansal M."/>
            <person name="Baxter L."/>
            <person name="Beisel K.W."/>
            <person name="Bersano T."/>
            <person name="Bono H."/>
            <person name="Chalk A.M."/>
            <person name="Chiu K.P."/>
            <person name="Choudhary V."/>
            <person name="Christoffels A."/>
            <person name="Clutterbuck D.R."/>
            <person name="Crowe M.L."/>
            <person name="Dalla E."/>
            <person name="Dalrymple B.P."/>
            <person name="de Bono B."/>
            <person name="Della Gatta G."/>
            <person name="di Bernardo D."/>
            <person name="Down T."/>
            <person name="Engstrom P."/>
            <person name="Fagiolini M."/>
            <person name="Faulkner G."/>
            <person name="Fletcher C.F."/>
            <person name="Fukushima T."/>
            <person name="Furuno M."/>
            <person name="Futaki S."/>
            <person name="Gariboldi M."/>
            <person name="Georgii-Hemming P."/>
            <person name="Gingeras T.R."/>
            <person name="Gojobori T."/>
            <person name="Green R.E."/>
            <person name="Gustincich S."/>
            <person name="Harbers M."/>
            <person name="Hayashi Y."/>
            <person name="Hensch T.K."/>
            <person name="Hirokawa N."/>
            <person name="Hill D."/>
            <person name="Huminiecki L."/>
            <person name="Iacono M."/>
            <person name="Ikeo K."/>
            <person name="Iwama A."/>
            <person name="Ishikawa T."/>
            <person name="Jakt M."/>
            <person name="Kanapin A."/>
            <person name="Katoh M."/>
            <person name="Kawasawa Y."/>
            <person name="Kelso J."/>
            <person name="Kitamura H."/>
            <person name="Kitano H."/>
            <person name="Kollias G."/>
            <person name="Krishnan S.P."/>
            <person name="Kruger A."/>
            <person name="Kummerfeld S.K."/>
            <person name="Kurochkin I.V."/>
            <person name="Lareau L.F."/>
            <person name="Lazarevic D."/>
            <person name="Lipovich L."/>
            <person name="Liu J."/>
            <person name="Liuni S."/>
            <person name="McWilliam S."/>
            <person name="Madan Babu M."/>
            <person name="Madera M."/>
            <person name="Marchionni L."/>
            <person name="Matsuda H."/>
            <person name="Matsuzawa S."/>
            <person name="Miki H."/>
            <person name="Mignone F."/>
            <person name="Miyake S."/>
            <person name="Morris K."/>
            <person name="Mottagui-Tabar S."/>
            <person name="Mulder N."/>
            <person name="Nakano N."/>
            <person name="Nakauchi H."/>
            <person name="Ng P."/>
            <person name="Nilsson R."/>
            <person name="Nishiguchi S."/>
            <person name="Nishikawa S."/>
            <person name="Nori F."/>
            <person name="Ohara O."/>
            <person name="Okazaki Y."/>
            <person name="Orlando V."/>
            <person name="Pang K.C."/>
            <person name="Pavan W.J."/>
            <person name="Pavesi G."/>
            <person name="Pesole G."/>
            <person name="Petrovsky N."/>
            <person name="Piazza S."/>
            <person name="Reed J."/>
            <person name="Reid J.F."/>
            <person name="Ring B.Z."/>
            <person name="Ringwald M."/>
            <person name="Rost B."/>
            <person name="Ruan Y."/>
            <person name="Salzberg S.L."/>
            <person name="Sandelin A."/>
            <person name="Schneider C."/>
            <person name="Schoenbach C."/>
            <person name="Sekiguchi K."/>
            <person name="Semple C.A."/>
            <person name="Seno S."/>
            <person name="Sessa L."/>
            <person name="Sheng Y."/>
            <person name="Shibata Y."/>
            <person name="Shimada H."/>
            <person name="Shimada K."/>
            <person name="Silva D."/>
            <person name="Sinclair B."/>
            <person name="Sperling S."/>
            <person name="Stupka E."/>
            <person name="Sugiura K."/>
            <person name="Sultana R."/>
            <person name="Takenaka Y."/>
            <person name="Taki K."/>
            <person name="Tammoja K."/>
            <person name="Tan S.L."/>
            <person name="Tang S."/>
            <person name="Taylor M.S."/>
            <person name="Tegner J."/>
            <person name="Teichmann S.A."/>
            <person name="Ueda H.R."/>
            <person name="van Nimwegen E."/>
            <person name="Verardo R."/>
            <person name="Wei C.L."/>
            <person name="Yagi K."/>
            <person name="Yamanishi H."/>
            <person name="Zabarovsky E."/>
            <person name="Zhu S."/>
            <person name="Zimmer A."/>
            <person name="Hide W."/>
            <person name="Bult C."/>
            <person name="Grimmond S.M."/>
            <person name="Teasdale R.D."/>
            <person name="Liu E.T."/>
            <person name="Brusic V."/>
            <person name="Quackenbush J."/>
            <person name="Wahlestedt C."/>
            <person name="Mattick J.S."/>
            <person name="Hume D.A."/>
            <person name="Kai C."/>
            <person name="Sasaki D."/>
            <person name="Tomaru Y."/>
            <person name="Fukuda S."/>
            <person name="Kanamori-Katayama M."/>
            <person name="Suzuki M."/>
            <person name="Aoki J."/>
            <person name="Arakawa T."/>
            <person name="Iida J."/>
            <person name="Imamura K."/>
            <person name="Itoh M."/>
            <person name="Kato T."/>
            <person name="Kawaji H."/>
            <person name="Kawagashira N."/>
            <person name="Kawashima T."/>
            <person name="Kojima M."/>
            <person name="Kondo S."/>
            <person name="Konno H."/>
            <person name="Nakano K."/>
            <person name="Ninomiya N."/>
            <person name="Nishio T."/>
            <person name="Okada M."/>
            <person name="Plessy C."/>
            <person name="Shibata K."/>
            <person name="Shiraki T."/>
            <person name="Suzuki S."/>
            <person name="Tagami M."/>
            <person name="Waki K."/>
            <person name="Watahiki A."/>
            <person name="Okamura-Oho Y."/>
            <person name="Suzuki H."/>
            <person name="Kawai J."/>
            <person name="Hayashizaki Y."/>
        </authorList>
    </citation>
    <scope>NUCLEOTIDE SEQUENCE [LARGE SCALE MRNA]</scope>
    <source>
        <strain>C57BL/6J</strain>
        <strain>NOD</strain>
        <tissue>Lung</tissue>
        <tissue>Thymus</tissue>
    </source>
</reference>
<reference key="6">
    <citation type="journal article" date="2004" name="Genome Res.">
        <title>The status, quality, and expansion of the NIH full-length cDNA project: the Mammalian Gene Collection (MGC).</title>
        <authorList>
            <consortium name="The MGC Project Team"/>
        </authorList>
    </citation>
    <scope>NUCLEOTIDE SEQUENCE [LARGE SCALE MRNA]</scope>
    <source>
        <strain>C57BL/6J</strain>
    </source>
</reference>
<reference key="7">
    <citation type="journal article" date="2000" name="Mol. Cell. Biol.">
        <title>Cooperative signals governing ARF-mdm2 interaction and nucleolar localization of the complex.</title>
        <authorList>
            <person name="Weber J.D."/>
            <person name="Kuo M.-L."/>
            <person name="Bothner B."/>
            <person name="DiGiammarino E.L."/>
            <person name="Kriwacki R.W."/>
            <person name="Roussel M.F."/>
            <person name="Sherr C.J."/>
        </authorList>
    </citation>
    <scope>NUCLEOLAR LOCALIZATION SIGNAL</scope>
</reference>
<reference key="8">
    <citation type="journal article" date="1999" name="Proc. Natl. Acad. Sci. U.S.A.">
        <title>Rapid ATM-dependent phosphorylation of MDM2 precedes p53 accumulation in response to DNA damage.</title>
        <authorList>
            <person name="Khosravi R."/>
            <person name="Maya R."/>
            <person name="Gottlieb T."/>
            <person name="Oren M."/>
            <person name="Shiloh Y."/>
            <person name="Shkedy D."/>
        </authorList>
    </citation>
    <scope>PHOSPHORYLATION BY ATM</scope>
</reference>
<reference key="9">
    <citation type="journal article" date="2000" name="J. Biol. Chem.">
        <title>A novel cellular protein (MTBP) binds to MDM2 and induces a G1 arrest that is suppressed by MDM2.</title>
        <authorList>
            <person name="Boyd M.T."/>
            <person name="Vlatkovic N."/>
            <person name="Haines D.S."/>
        </authorList>
    </citation>
    <scope>INTERACTION WITH MTBP</scope>
</reference>
<reference key="10">
    <citation type="journal article" date="2001" name="Science">
        <title>Regulation of receptor fate by ubiquitination of activated beta 2-adrenergic receptor and beta-arrestin.</title>
        <authorList>
            <person name="Shenoy S.K."/>
            <person name="McDonald P.H."/>
            <person name="Kohout T.A."/>
            <person name="Lefkowitz R.J."/>
        </authorList>
    </citation>
    <scope>FUNCTION</scope>
    <scope>INTERACTION WITH AARB2</scope>
</reference>
<reference key="11">
    <citation type="journal article" date="2003" name="Neuron">
        <title>Ubiquitination regulates PSD-95 degradation and AMPA receptor surface expression.</title>
        <authorList>
            <person name="Colledge M."/>
            <person name="Snyder E.M."/>
            <person name="Crozier R.A."/>
            <person name="Soderling J.A."/>
            <person name="Jin Y."/>
            <person name="Langeberg L.K."/>
            <person name="Lu H."/>
            <person name="Bear M.F."/>
            <person name="Scott J.D."/>
        </authorList>
    </citation>
    <scope>FUNCTION</scope>
    <scope>CATALYTIC ACTIVITY</scope>
    <scope>DISRUPTION PHENOTYPE</scope>
</reference>
<reference key="12">
    <citation type="journal article" date="2004" name="Nat. Cell Biol.">
        <title>PML regulates p53 stability by sequestering Mdm2 to the nucleolus.</title>
        <authorList>
            <person name="Bernardi R."/>
            <person name="Scaglioni P.P."/>
            <person name="Bergmann S."/>
            <person name="Horn H.F."/>
            <person name="Vousden K.H."/>
            <person name="Pandolfi P.P."/>
        </authorList>
    </citation>
    <scope>FUNCTION</scope>
    <scope>INTERACTION WITH PML AND RPL11</scope>
    <scope>SUBCELLULAR LOCATION</scope>
</reference>
<reference key="13">
    <citation type="journal article" date="2007" name="J. Biol. Chem.">
        <title>A novel nuclear interactor of ARF and MDM2 (NIAM) that maintains chromosomal stability.</title>
        <authorList>
            <person name="Tompkins V.S."/>
            <person name="Hagen J."/>
            <person name="Frazier A.A."/>
            <person name="Lushnikova T."/>
            <person name="Fitzgerald M.P."/>
            <person name="di Tommaso A.D."/>
            <person name="Ladeveze V."/>
            <person name="Domann F.E."/>
            <person name="Eischen C.M."/>
            <person name="Quelle D.E."/>
        </authorList>
    </citation>
    <scope>INTERACTION WITH TBRG1</scope>
</reference>
<reference key="14">
    <citation type="journal article" date="2010" name="Cell">
        <title>A tissue-specific atlas of mouse protein phosphorylation and expression.</title>
        <authorList>
            <person name="Huttlin E.L."/>
            <person name="Jedrychowski M.P."/>
            <person name="Elias J.E."/>
            <person name="Goswami T."/>
            <person name="Rad R."/>
            <person name="Beausoleil S.A."/>
            <person name="Villen J."/>
            <person name="Haas W."/>
            <person name="Sowa M.E."/>
            <person name="Gygi S.P."/>
        </authorList>
    </citation>
    <scope>PHOSPHORYLATION [LARGE SCALE ANALYSIS] AT SER-183</scope>
    <scope>IDENTIFICATION BY MASS SPECTROMETRY [LARGE SCALE ANALYSIS]</scope>
    <source>
        <tissue>Brain</tissue>
        <tissue>Kidney</tissue>
        <tissue>Lung</tissue>
        <tissue>Pancreas</tissue>
        <tissue>Testis</tissue>
    </source>
</reference>
<reference key="15">
    <citation type="journal article" date="2011" name="Nat. Med.">
        <title>Regulation of the MDM2-P53 pathway and tumor growth by PICT1 via nucleolar RPL11.</title>
        <authorList>
            <person name="Sasaki M."/>
            <person name="Kawahara K."/>
            <person name="Nishio M."/>
            <person name="Mimori K."/>
            <person name="Kogo R."/>
            <person name="Hamada K."/>
            <person name="Itoh B."/>
            <person name="Wang J."/>
            <person name="Komatsu Y."/>
            <person name="Yang Y.R."/>
            <person name="Hikasa H."/>
            <person name="Horie Y."/>
            <person name="Yamashita T."/>
            <person name="Kamijo T."/>
            <person name="Zhang Y."/>
            <person name="Zhu Y."/>
            <person name="Prives C."/>
            <person name="Nakano T."/>
            <person name="Mak T.W."/>
            <person name="Sasaki T."/>
            <person name="Maehama T."/>
            <person name="Mori M."/>
            <person name="Suzuki A."/>
        </authorList>
    </citation>
    <scope>FUNCTION</scope>
    <scope>SUBCELLULAR LOCATION</scope>
    <scope>INTERACTION WITH RPL11</scope>
</reference>
<reference key="16">
    <citation type="journal article" date="2014" name="Cell Rep.">
        <title>Npas4 regulates Mdm2 and thus Dcx in experience-dependent dendritic spine development of newborn olfactory bulb interneurons.</title>
        <authorList>
            <person name="Yoshihara S."/>
            <person name="Takahashi H."/>
            <person name="Nishimura N."/>
            <person name="Kinoshita M."/>
            <person name="Asahina R."/>
            <person name="Kitsuki M."/>
            <person name="Tatsumi K."/>
            <person name="Furukawa-Hibi Y."/>
            <person name="Hirai H."/>
            <person name="Nagai T."/>
            <person name="Yamada K."/>
            <person name="Tsuboi A."/>
        </authorList>
    </citation>
    <scope>FUNCTION</scope>
    <scope>INDUCTION</scope>
</reference>
<reference key="17">
    <citation type="journal article" date="2015" name="J. Clin. Invest.">
        <title>BAI1 regulates spatial learning and synaptic plasticity in the hippocampus.</title>
        <authorList>
            <person name="Zhu D."/>
            <person name="Li C."/>
            <person name="Swanson A.M."/>
            <person name="Villalba R.M."/>
            <person name="Guo J."/>
            <person name="Zhang Z."/>
            <person name="Matheny S."/>
            <person name="Murakami T."/>
            <person name="Stephenson J.R."/>
            <person name="Daniel S."/>
            <person name="Fukata M."/>
            <person name="Hall R.A."/>
            <person name="Olson J.J."/>
            <person name="Neigh G.N."/>
            <person name="Smith Y."/>
            <person name="Rainnie D.G."/>
            <person name="Van Meir E.G."/>
        </authorList>
    </citation>
    <scope>INTERACTION WITH ADGRB1</scope>
</reference>
<reference key="18">
    <citation type="journal article" date="2019" name="Mol. Cell">
        <title>MDM2 Integrates Cellular Respiration and Apoptotic Signaling through NDUFS1 and the Mitochondrial Network.</title>
        <authorList>
            <person name="Elkholi R."/>
            <person name="Abraham-Enachescu I."/>
            <person name="Trotta A.P."/>
            <person name="Rubio-Patino C."/>
            <person name="Mohammed J.N."/>
            <person name="Luna-Vargas M.P.A."/>
            <person name="Gelles J.D."/>
            <person name="Kaminetsky J.R."/>
            <person name="Serasinghe M.N."/>
            <person name="Zou C."/>
            <person name="Ali S."/>
            <person name="McStay G.P."/>
            <person name="Pfleger C.M."/>
            <person name="Chipuk J.E."/>
        </authorList>
    </citation>
    <scope>FUNCTION</scope>
    <scope>INTERACTION WITH NDUFS1</scope>
    <scope>MUTAGENESIS OF GLY-58</scope>
</reference>
<dbReference type="EC" id="2.3.2.27" evidence="11"/>
<dbReference type="EMBL" id="X58876">
    <property type="protein sequence ID" value="CAA41684.1"/>
    <property type="molecule type" value="mRNA"/>
</dbReference>
<dbReference type="EMBL" id="U40145">
    <property type="protein sequence ID" value="AAA91167.1"/>
    <property type="molecule type" value="Genomic_DNA"/>
</dbReference>
<dbReference type="EMBL" id="U47944">
    <property type="protein sequence ID" value="AAB09030.1"/>
    <property type="molecule type" value="Genomic_DNA"/>
</dbReference>
<dbReference type="EMBL" id="U47935">
    <property type="protein sequence ID" value="AAB09030.1"/>
    <property type="status" value="JOINED"/>
    <property type="molecule type" value="Genomic_DNA"/>
</dbReference>
<dbReference type="EMBL" id="U47936">
    <property type="protein sequence ID" value="AAB09030.1"/>
    <property type="status" value="JOINED"/>
    <property type="molecule type" value="Genomic_DNA"/>
</dbReference>
<dbReference type="EMBL" id="U47937">
    <property type="protein sequence ID" value="AAB09030.1"/>
    <property type="status" value="JOINED"/>
    <property type="molecule type" value="Genomic_DNA"/>
</dbReference>
<dbReference type="EMBL" id="U47938">
    <property type="protein sequence ID" value="AAB09030.1"/>
    <property type="status" value="JOINED"/>
    <property type="molecule type" value="Genomic_DNA"/>
</dbReference>
<dbReference type="EMBL" id="U47939">
    <property type="protein sequence ID" value="AAB09030.1"/>
    <property type="status" value="JOINED"/>
    <property type="molecule type" value="Genomic_DNA"/>
</dbReference>
<dbReference type="EMBL" id="U47940">
    <property type="protein sequence ID" value="AAB09030.1"/>
    <property type="status" value="JOINED"/>
    <property type="molecule type" value="Genomic_DNA"/>
</dbReference>
<dbReference type="EMBL" id="U47941">
    <property type="protein sequence ID" value="AAB09030.1"/>
    <property type="status" value="JOINED"/>
    <property type="molecule type" value="Genomic_DNA"/>
</dbReference>
<dbReference type="EMBL" id="U47942">
    <property type="protein sequence ID" value="AAB09030.1"/>
    <property type="status" value="JOINED"/>
    <property type="molecule type" value="Genomic_DNA"/>
</dbReference>
<dbReference type="EMBL" id="U47943">
    <property type="protein sequence ID" value="AAB09030.1"/>
    <property type="status" value="JOINED"/>
    <property type="molecule type" value="Genomic_DNA"/>
</dbReference>
<dbReference type="EMBL" id="U47934">
    <property type="protein sequence ID" value="AAB09031.1"/>
    <property type="molecule type" value="mRNA"/>
</dbReference>
<dbReference type="EMBL" id="AK004719">
    <property type="protein sequence ID" value="BAB23502.1"/>
    <property type="molecule type" value="mRNA"/>
</dbReference>
<dbReference type="EMBL" id="AK088638">
    <property type="protein sequence ID" value="BAC40470.1"/>
    <property type="molecule type" value="mRNA"/>
</dbReference>
<dbReference type="EMBL" id="BC050902">
    <property type="protein sequence ID" value="AAH50902.1"/>
    <property type="molecule type" value="mRNA"/>
</dbReference>
<dbReference type="CCDS" id="CCDS24194.1">
    <molecule id="P23804-1"/>
</dbReference>
<dbReference type="CCDS" id="CCDS70110.1">
    <molecule id="P23804-2"/>
</dbReference>
<dbReference type="PIR" id="S15349">
    <property type="entry name" value="S15349"/>
</dbReference>
<dbReference type="RefSeq" id="NP_001275515.1">
    <molecule id="P23804-2"/>
    <property type="nucleotide sequence ID" value="NM_001288586.3"/>
</dbReference>
<dbReference type="RefSeq" id="NP_001415540.1">
    <molecule id="P23804-2"/>
    <property type="nucleotide sequence ID" value="NM_001428611.1"/>
</dbReference>
<dbReference type="RefSeq" id="NP_001415541.1">
    <molecule id="P23804-2"/>
    <property type="nucleotide sequence ID" value="NM_001428612.1"/>
</dbReference>
<dbReference type="RefSeq" id="NP_001415542.1">
    <molecule id="P23804-2"/>
    <property type="nucleotide sequence ID" value="NM_001428613.1"/>
</dbReference>
<dbReference type="RefSeq" id="NP_001415543.1">
    <molecule id="P23804-2"/>
    <property type="nucleotide sequence ID" value="NM_001428614.1"/>
</dbReference>
<dbReference type="RefSeq" id="NP_001415544.1">
    <molecule id="P23804-2"/>
    <property type="nucleotide sequence ID" value="NM_001428615.1"/>
</dbReference>
<dbReference type="RefSeq" id="NP_034916.1">
    <molecule id="P23804-1"/>
    <property type="nucleotide sequence ID" value="NM_010786.5"/>
</dbReference>
<dbReference type="SMR" id="P23804"/>
<dbReference type="BioGRID" id="201372">
    <property type="interactions" value="123"/>
</dbReference>
<dbReference type="CORUM" id="P23804"/>
<dbReference type="DIP" id="DIP-24174N"/>
<dbReference type="DIP" id="DIP-24196N"/>
<dbReference type="FunCoup" id="P23804">
    <property type="interactions" value="3071"/>
</dbReference>
<dbReference type="IntAct" id="P23804">
    <property type="interactions" value="23"/>
</dbReference>
<dbReference type="MINT" id="P23804"/>
<dbReference type="STRING" id="10090.ENSMUSP00000020408"/>
<dbReference type="BindingDB" id="P23804"/>
<dbReference type="ChEMBL" id="CHEMBL3600279"/>
<dbReference type="iPTMnet" id="P23804"/>
<dbReference type="PhosphoSitePlus" id="P23804"/>
<dbReference type="jPOST" id="P23804"/>
<dbReference type="PaxDb" id="10090-ENSMUSP00000020408"/>
<dbReference type="PeptideAtlas" id="P23804"/>
<dbReference type="ProteomicsDB" id="292177">
    <molecule id="P23804-1"/>
</dbReference>
<dbReference type="ProteomicsDB" id="292178">
    <molecule id="P23804-2"/>
</dbReference>
<dbReference type="Antibodypedia" id="3664">
    <property type="antibodies" value="1866 antibodies from 46 providers"/>
</dbReference>
<dbReference type="DNASU" id="17246"/>
<dbReference type="Ensembl" id="ENSMUST00000020408.16">
    <molecule id="P23804-1"/>
    <property type="protein sequence ID" value="ENSMUSP00000020408.9"/>
    <property type="gene ID" value="ENSMUSG00000020184.16"/>
</dbReference>
<dbReference type="Ensembl" id="ENSMUST00000105263.9">
    <molecule id="P23804-2"/>
    <property type="protein sequence ID" value="ENSMUSP00000100898.2"/>
    <property type="gene ID" value="ENSMUSG00000020184.16"/>
</dbReference>
<dbReference type="GeneID" id="17246"/>
<dbReference type="KEGG" id="mmu:17246"/>
<dbReference type="UCSC" id="uc007hdl.2">
    <molecule id="P23804-1"/>
    <property type="organism name" value="mouse"/>
</dbReference>
<dbReference type="AGR" id="MGI:96952"/>
<dbReference type="CTD" id="4193"/>
<dbReference type="MGI" id="MGI:96952">
    <property type="gene designation" value="Mdm2"/>
</dbReference>
<dbReference type="VEuPathDB" id="HostDB:ENSMUSG00000020184"/>
<dbReference type="eggNOG" id="ENOG502QQNV">
    <property type="taxonomic scope" value="Eukaryota"/>
</dbReference>
<dbReference type="GeneTree" id="ENSGT00530000063539"/>
<dbReference type="HOGENOM" id="CLU_043544_0_0_1"/>
<dbReference type="InParanoid" id="P23804"/>
<dbReference type="OMA" id="DYWRCSK"/>
<dbReference type="OrthoDB" id="24526at2759"/>
<dbReference type="PhylomeDB" id="P23804"/>
<dbReference type="TreeFam" id="TF105306"/>
<dbReference type="Reactome" id="R-MMU-198323">
    <property type="pathway name" value="AKT phosphorylates targets in the cytosol"/>
</dbReference>
<dbReference type="Reactome" id="R-MMU-2559580">
    <property type="pathway name" value="Oxidative Stress Induced Senescence"/>
</dbReference>
<dbReference type="Reactome" id="R-MMU-2559585">
    <property type="pathway name" value="Oncogene Induced Senescence"/>
</dbReference>
<dbReference type="Reactome" id="R-MMU-3232142">
    <property type="pathway name" value="SUMOylation of ubiquitinylation proteins"/>
</dbReference>
<dbReference type="Reactome" id="R-MMU-399719">
    <property type="pathway name" value="Trafficking of AMPA receptors"/>
</dbReference>
<dbReference type="Reactome" id="R-MMU-5689880">
    <property type="pathway name" value="Ub-specific processing proteases"/>
</dbReference>
<dbReference type="Reactome" id="R-MMU-6804756">
    <property type="pathway name" value="Regulation of TP53 Activity through Phosphorylation"/>
</dbReference>
<dbReference type="Reactome" id="R-MMU-6804757">
    <property type="pathway name" value="Regulation of TP53 Degradation"/>
</dbReference>
<dbReference type="Reactome" id="R-MMU-6804760">
    <property type="pathway name" value="Regulation of TP53 Activity through Methylation"/>
</dbReference>
<dbReference type="Reactome" id="R-MMU-69541">
    <property type="pathway name" value="Stabilization of p53"/>
</dbReference>
<dbReference type="Reactome" id="R-MMU-8941858">
    <property type="pathway name" value="Regulation of RUNX3 expression and activity"/>
</dbReference>
<dbReference type="BioGRID-ORCS" id="17246">
    <property type="hits" value="16 hits in 81 CRISPR screens"/>
</dbReference>
<dbReference type="CD-CODE" id="2E092FC3">
    <property type="entry name" value="PML body"/>
</dbReference>
<dbReference type="ChiTaRS" id="Mdm2">
    <property type="organism name" value="mouse"/>
</dbReference>
<dbReference type="PRO" id="PR:P23804"/>
<dbReference type="Proteomes" id="UP000000589">
    <property type="component" value="Chromosome 10"/>
</dbReference>
<dbReference type="RNAct" id="P23804">
    <property type="molecule type" value="protein"/>
</dbReference>
<dbReference type="Bgee" id="ENSMUSG00000020184">
    <property type="expression patterns" value="Expressed in animal zygote and 282 other cell types or tissues"/>
</dbReference>
<dbReference type="ExpressionAtlas" id="P23804">
    <property type="expression patterns" value="baseline and differential"/>
</dbReference>
<dbReference type="GO" id="GO:0034451">
    <property type="term" value="C:centriolar satellite"/>
    <property type="evidence" value="ECO:0007669"/>
    <property type="project" value="Ensembl"/>
</dbReference>
<dbReference type="GO" id="GO:0005737">
    <property type="term" value="C:cytoplasm"/>
    <property type="evidence" value="ECO:0000314"/>
    <property type="project" value="MGI"/>
</dbReference>
<dbReference type="GO" id="GO:0005829">
    <property type="term" value="C:cytosol"/>
    <property type="evidence" value="ECO:0000304"/>
    <property type="project" value="Reactome"/>
</dbReference>
<dbReference type="GO" id="GO:0098978">
    <property type="term" value="C:glutamatergic synapse"/>
    <property type="evidence" value="ECO:0007669"/>
    <property type="project" value="Ensembl"/>
</dbReference>
<dbReference type="GO" id="GO:0016604">
    <property type="term" value="C:nuclear body"/>
    <property type="evidence" value="ECO:0007669"/>
    <property type="project" value="Ensembl"/>
</dbReference>
<dbReference type="GO" id="GO:0005730">
    <property type="term" value="C:nucleolus"/>
    <property type="evidence" value="ECO:0000314"/>
    <property type="project" value="UniProtKB"/>
</dbReference>
<dbReference type="GO" id="GO:0005634">
    <property type="term" value="C:nucleus"/>
    <property type="evidence" value="ECO:0000314"/>
    <property type="project" value="MGI"/>
</dbReference>
<dbReference type="GO" id="GO:0014069">
    <property type="term" value="C:postsynaptic density"/>
    <property type="evidence" value="ECO:0007669"/>
    <property type="project" value="Ensembl"/>
</dbReference>
<dbReference type="GO" id="GO:0017053">
    <property type="term" value="C:transcription repressor complex"/>
    <property type="evidence" value="ECO:0007669"/>
    <property type="project" value="Ensembl"/>
</dbReference>
<dbReference type="GO" id="GO:0008097">
    <property type="term" value="F:5S rRNA binding"/>
    <property type="evidence" value="ECO:0000250"/>
    <property type="project" value="UniProtKB"/>
</dbReference>
<dbReference type="GO" id="GO:0097718">
    <property type="term" value="F:disordered domain specific binding"/>
    <property type="evidence" value="ECO:0007669"/>
    <property type="project" value="Ensembl"/>
</dbReference>
<dbReference type="GO" id="GO:0042802">
    <property type="term" value="F:identical protein binding"/>
    <property type="evidence" value="ECO:0007669"/>
    <property type="project" value="Ensembl"/>
</dbReference>
<dbReference type="GO" id="GO:0016874">
    <property type="term" value="F:ligase activity"/>
    <property type="evidence" value="ECO:0007669"/>
    <property type="project" value="Ensembl"/>
</dbReference>
<dbReference type="GO" id="GO:0061663">
    <property type="term" value="F:NEDD8 ligase activity"/>
    <property type="evidence" value="ECO:0007669"/>
    <property type="project" value="Ensembl"/>
</dbReference>
<dbReference type="GO" id="GO:0002039">
    <property type="term" value="F:p53 binding"/>
    <property type="evidence" value="ECO:0000353"/>
    <property type="project" value="BHF-UCL"/>
</dbReference>
<dbReference type="GO" id="GO:0042975">
    <property type="term" value="F:peroxisome proliferator activated receptor binding"/>
    <property type="evidence" value="ECO:0007669"/>
    <property type="project" value="Ensembl"/>
</dbReference>
<dbReference type="GO" id="GO:0033612">
    <property type="term" value="F:receptor serine/threonine kinase binding"/>
    <property type="evidence" value="ECO:0007669"/>
    <property type="project" value="Ensembl"/>
</dbReference>
<dbReference type="GO" id="GO:0043021">
    <property type="term" value="F:ribonucleoprotein complex binding"/>
    <property type="evidence" value="ECO:0000250"/>
    <property type="project" value="UniProtKB"/>
</dbReference>
<dbReference type="GO" id="GO:0043130">
    <property type="term" value="F:ubiquitin binding"/>
    <property type="evidence" value="ECO:0000250"/>
    <property type="project" value="UniProtKB"/>
</dbReference>
<dbReference type="GO" id="GO:0061630">
    <property type="term" value="F:ubiquitin protein ligase activity"/>
    <property type="evidence" value="ECO:0000314"/>
    <property type="project" value="MGI"/>
</dbReference>
<dbReference type="GO" id="GO:0031625">
    <property type="term" value="F:ubiquitin protein ligase binding"/>
    <property type="evidence" value="ECO:0007669"/>
    <property type="project" value="Ensembl"/>
</dbReference>
<dbReference type="GO" id="GO:0004842">
    <property type="term" value="F:ubiquitin-protein transferase activity"/>
    <property type="evidence" value="ECO:0000314"/>
    <property type="project" value="MGI"/>
</dbReference>
<dbReference type="GO" id="GO:0008270">
    <property type="term" value="F:zinc ion binding"/>
    <property type="evidence" value="ECO:0007669"/>
    <property type="project" value="UniProtKB-KW"/>
</dbReference>
<dbReference type="GO" id="GO:1990000">
    <property type="term" value="P:amyloid fibril formation"/>
    <property type="evidence" value="ECO:0007669"/>
    <property type="project" value="Ensembl"/>
</dbReference>
<dbReference type="GO" id="GO:0006915">
    <property type="term" value="P:apoptotic process"/>
    <property type="evidence" value="ECO:0000314"/>
    <property type="project" value="UniProtKB"/>
</dbReference>
<dbReference type="GO" id="GO:0003283">
    <property type="term" value="P:atrial septum development"/>
    <property type="evidence" value="ECO:0000316"/>
    <property type="project" value="MGI"/>
</dbReference>
<dbReference type="GO" id="GO:0003181">
    <property type="term" value="P:atrioventricular valve morphogenesis"/>
    <property type="evidence" value="ECO:0000316"/>
    <property type="project" value="MGI"/>
</dbReference>
<dbReference type="GO" id="GO:0001568">
    <property type="term" value="P:blood vessel development"/>
    <property type="evidence" value="ECO:0000315"/>
    <property type="project" value="MGI"/>
</dbReference>
<dbReference type="GO" id="GO:0001974">
    <property type="term" value="P:blood vessel remodeling"/>
    <property type="evidence" value="ECO:0000315"/>
    <property type="project" value="MGI"/>
</dbReference>
<dbReference type="GO" id="GO:0060411">
    <property type="term" value="P:cardiac septum morphogenesis"/>
    <property type="evidence" value="ECO:0000316"/>
    <property type="project" value="MGI"/>
</dbReference>
<dbReference type="GO" id="GO:0072717">
    <property type="term" value="P:cellular response to actinomycin D"/>
    <property type="evidence" value="ECO:0007669"/>
    <property type="project" value="Ensembl"/>
</dbReference>
<dbReference type="GO" id="GO:0071312">
    <property type="term" value="P:cellular response to alkaloid"/>
    <property type="evidence" value="ECO:0007669"/>
    <property type="project" value="Ensembl"/>
</dbReference>
<dbReference type="GO" id="GO:0071391">
    <property type="term" value="P:cellular response to estrogen stimulus"/>
    <property type="evidence" value="ECO:0007669"/>
    <property type="project" value="Ensembl"/>
</dbReference>
<dbReference type="GO" id="GO:0071480">
    <property type="term" value="P:cellular response to gamma radiation"/>
    <property type="evidence" value="ECO:0007669"/>
    <property type="project" value="Ensembl"/>
</dbReference>
<dbReference type="GO" id="GO:0071363">
    <property type="term" value="P:cellular response to growth factor stimulus"/>
    <property type="evidence" value="ECO:0007669"/>
    <property type="project" value="Ensembl"/>
</dbReference>
<dbReference type="GO" id="GO:0070301">
    <property type="term" value="P:cellular response to hydrogen peroxide"/>
    <property type="evidence" value="ECO:0007669"/>
    <property type="project" value="Ensembl"/>
</dbReference>
<dbReference type="GO" id="GO:0071456">
    <property type="term" value="P:cellular response to hypoxia"/>
    <property type="evidence" value="ECO:0007669"/>
    <property type="project" value="Ensembl"/>
</dbReference>
<dbReference type="GO" id="GO:0071375">
    <property type="term" value="P:cellular response to peptide hormone stimulus"/>
    <property type="evidence" value="ECO:0007669"/>
    <property type="project" value="Ensembl"/>
</dbReference>
<dbReference type="GO" id="GO:0071494">
    <property type="term" value="P:cellular response to UV-C"/>
    <property type="evidence" value="ECO:0007669"/>
    <property type="project" value="Ensembl"/>
</dbReference>
<dbReference type="GO" id="GO:0071301">
    <property type="term" value="P:cellular response to vitamin B1"/>
    <property type="evidence" value="ECO:0007669"/>
    <property type="project" value="Ensembl"/>
</dbReference>
<dbReference type="GO" id="GO:0030330">
    <property type="term" value="P:DNA damage response, signal transduction by p53 class mediator"/>
    <property type="evidence" value="ECO:0007669"/>
    <property type="project" value="Ensembl"/>
</dbReference>
<dbReference type="GO" id="GO:0003203">
    <property type="term" value="P:endocardial cushion morphogenesis"/>
    <property type="evidence" value="ECO:0000315"/>
    <property type="project" value="MGI"/>
</dbReference>
<dbReference type="GO" id="GO:0045184">
    <property type="term" value="P:establishment of protein localization"/>
    <property type="evidence" value="ECO:0007669"/>
    <property type="project" value="Ensembl"/>
</dbReference>
<dbReference type="GO" id="GO:0072537">
    <property type="term" value="P:fibroblast activation"/>
    <property type="evidence" value="ECO:0007669"/>
    <property type="project" value="Ensembl"/>
</dbReference>
<dbReference type="GO" id="GO:0007507">
    <property type="term" value="P:heart development"/>
    <property type="evidence" value="ECO:0000315"/>
    <property type="project" value="MGI"/>
</dbReference>
<dbReference type="GO" id="GO:0003170">
    <property type="term" value="P:heart valve development"/>
    <property type="evidence" value="ECO:0000316"/>
    <property type="project" value="MGI"/>
</dbReference>
<dbReference type="GO" id="GO:0043518">
    <property type="term" value="P:negative regulation of DNA damage response, signal transduction by p53 class mediator"/>
    <property type="evidence" value="ECO:0007669"/>
    <property type="project" value="Ensembl"/>
</dbReference>
<dbReference type="GO" id="GO:1902254">
    <property type="term" value="P:negative regulation of intrinsic apoptotic signaling pathway by p53 class mediator"/>
    <property type="evidence" value="ECO:0007669"/>
    <property type="project" value="Ensembl"/>
</dbReference>
<dbReference type="GO" id="GO:0010977">
    <property type="term" value="P:negative regulation of neuron projection development"/>
    <property type="evidence" value="ECO:0007669"/>
    <property type="project" value="Ensembl"/>
</dbReference>
<dbReference type="GO" id="GO:0010955">
    <property type="term" value="P:negative regulation of protein processing"/>
    <property type="evidence" value="ECO:0007669"/>
    <property type="project" value="Ensembl"/>
</dbReference>
<dbReference type="GO" id="GO:0000122">
    <property type="term" value="P:negative regulation of transcription by RNA polymerase II"/>
    <property type="evidence" value="ECO:0007669"/>
    <property type="project" value="Ensembl"/>
</dbReference>
<dbReference type="GO" id="GO:0045787">
    <property type="term" value="P:positive regulation of cell cycle"/>
    <property type="evidence" value="ECO:0000316"/>
    <property type="project" value="MGI"/>
</dbReference>
<dbReference type="GO" id="GO:0010628">
    <property type="term" value="P:positive regulation of gene expression"/>
    <property type="evidence" value="ECO:0007669"/>
    <property type="project" value="Ensembl"/>
</dbReference>
<dbReference type="GO" id="GO:0051149">
    <property type="term" value="P:positive regulation of muscle cell differentiation"/>
    <property type="evidence" value="ECO:0000315"/>
    <property type="project" value="CACAO"/>
</dbReference>
<dbReference type="GO" id="GO:0032436">
    <property type="term" value="P:positive regulation of proteasomal ubiquitin-dependent protein catabolic process"/>
    <property type="evidence" value="ECO:0007669"/>
    <property type="project" value="Ensembl"/>
</dbReference>
<dbReference type="GO" id="GO:0046827">
    <property type="term" value="P:positive regulation of protein export from nucleus"/>
    <property type="evidence" value="ECO:0007669"/>
    <property type="project" value="Ensembl"/>
</dbReference>
<dbReference type="GO" id="GO:1904754">
    <property type="term" value="P:positive regulation of vascular associated smooth muscle cell migration"/>
    <property type="evidence" value="ECO:0007669"/>
    <property type="project" value="Ensembl"/>
</dbReference>
<dbReference type="GO" id="GO:1904707">
    <property type="term" value="P:positive regulation of vascular associated smooth muscle cell proliferation"/>
    <property type="evidence" value="ECO:0007669"/>
    <property type="project" value="Ensembl"/>
</dbReference>
<dbReference type="GO" id="GO:0043161">
    <property type="term" value="P:proteasome-mediated ubiquitin-dependent protein catabolic process"/>
    <property type="evidence" value="ECO:0007669"/>
    <property type="project" value="Ensembl"/>
</dbReference>
<dbReference type="GO" id="GO:0051865">
    <property type="term" value="P:protein autoubiquitination"/>
    <property type="evidence" value="ECO:0007669"/>
    <property type="project" value="Ensembl"/>
</dbReference>
<dbReference type="GO" id="GO:0031648">
    <property type="term" value="P:protein destabilization"/>
    <property type="evidence" value="ECO:0007669"/>
    <property type="project" value="Ensembl"/>
</dbReference>
<dbReference type="GO" id="GO:0034504">
    <property type="term" value="P:protein localization to nucleus"/>
    <property type="evidence" value="ECO:0007669"/>
    <property type="project" value="Ensembl"/>
</dbReference>
<dbReference type="GO" id="GO:0016567">
    <property type="term" value="P:protein ubiquitination"/>
    <property type="evidence" value="ECO:0000250"/>
    <property type="project" value="UniProtKB"/>
</dbReference>
<dbReference type="GO" id="GO:0065003">
    <property type="term" value="P:protein-containing complex assembly"/>
    <property type="evidence" value="ECO:0007669"/>
    <property type="project" value="Ensembl"/>
</dbReference>
<dbReference type="GO" id="GO:0010468">
    <property type="term" value="P:regulation of gene expression"/>
    <property type="evidence" value="ECO:0000315"/>
    <property type="project" value="MGI"/>
</dbReference>
<dbReference type="GO" id="GO:0002027">
    <property type="term" value="P:regulation of heart rate"/>
    <property type="evidence" value="ECO:0000316"/>
    <property type="project" value="MGI"/>
</dbReference>
<dbReference type="GO" id="GO:0099149">
    <property type="term" value="P:regulation of postsynaptic neurotransmitter receptor internalization"/>
    <property type="evidence" value="ECO:0007669"/>
    <property type="project" value="Ensembl"/>
</dbReference>
<dbReference type="GO" id="GO:0099576">
    <property type="term" value="P:regulation of protein catabolic process at postsynapse, modulating synaptic transmission"/>
    <property type="evidence" value="ECO:0007669"/>
    <property type="project" value="Ensembl"/>
</dbReference>
<dbReference type="GO" id="GO:0042220">
    <property type="term" value="P:response to cocaine"/>
    <property type="evidence" value="ECO:0007669"/>
    <property type="project" value="Ensembl"/>
</dbReference>
<dbReference type="GO" id="GO:0045472">
    <property type="term" value="P:response to ether"/>
    <property type="evidence" value="ECO:0007669"/>
    <property type="project" value="Ensembl"/>
</dbReference>
<dbReference type="GO" id="GO:1904404">
    <property type="term" value="P:response to formaldehyde"/>
    <property type="evidence" value="ECO:0007669"/>
    <property type="project" value="Ensembl"/>
</dbReference>
<dbReference type="GO" id="GO:0010039">
    <property type="term" value="P:response to iron ion"/>
    <property type="evidence" value="ECO:0007669"/>
    <property type="project" value="Ensembl"/>
</dbReference>
<dbReference type="GO" id="GO:0032026">
    <property type="term" value="P:response to magnesium ion"/>
    <property type="evidence" value="ECO:0007669"/>
    <property type="project" value="Ensembl"/>
</dbReference>
<dbReference type="GO" id="GO:0048545">
    <property type="term" value="P:response to steroid hormone"/>
    <property type="evidence" value="ECO:0007669"/>
    <property type="project" value="Ensembl"/>
</dbReference>
<dbReference type="GO" id="GO:0009636">
    <property type="term" value="P:response to toxic substance"/>
    <property type="evidence" value="ECO:0007669"/>
    <property type="project" value="Ensembl"/>
</dbReference>
<dbReference type="GO" id="GO:1990785">
    <property type="term" value="P:response to water-immersion restraint stress"/>
    <property type="evidence" value="ECO:0007669"/>
    <property type="project" value="Ensembl"/>
</dbReference>
<dbReference type="GO" id="GO:0009410">
    <property type="term" value="P:response to xenobiotic stimulus"/>
    <property type="evidence" value="ECO:0007669"/>
    <property type="project" value="Ensembl"/>
</dbReference>
<dbReference type="GO" id="GO:0007089">
    <property type="term" value="P:traversing start control point of mitotic cell cycle"/>
    <property type="evidence" value="ECO:0000314"/>
    <property type="project" value="MGI"/>
</dbReference>
<dbReference type="GO" id="GO:0006511">
    <property type="term" value="P:ubiquitin-dependent protein catabolic process"/>
    <property type="evidence" value="ECO:0000314"/>
    <property type="project" value="MGI"/>
</dbReference>
<dbReference type="GO" id="GO:0003281">
    <property type="term" value="P:ventricular septum development"/>
    <property type="evidence" value="ECO:0000316"/>
    <property type="project" value="MGI"/>
</dbReference>
<dbReference type="CDD" id="cd17672">
    <property type="entry name" value="MDM2"/>
    <property type="match status" value="1"/>
</dbReference>
<dbReference type="CDD" id="cd16783">
    <property type="entry name" value="mRING-HC-C2H2C4_MDM2"/>
    <property type="match status" value="1"/>
</dbReference>
<dbReference type="FunFam" id="1.10.245.10:FF:000002">
    <property type="entry name" value="E3 ubiquitin-protein ligase Mdm2"/>
    <property type="match status" value="1"/>
</dbReference>
<dbReference type="FunFam" id="2.30.30.380:FF:000005">
    <property type="entry name" value="E3 ubiquitin-protein ligase Mdm2"/>
    <property type="match status" value="1"/>
</dbReference>
<dbReference type="FunFam" id="3.30.40.10:FF:000076">
    <property type="entry name" value="E3 ubiquitin-protein ligase Mdm2"/>
    <property type="match status" value="1"/>
</dbReference>
<dbReference type="Gene3D" id="1.10.245.10">
    <property type="entry name" value="SWIB/MDM2 domain"/>
    <property type="match status" value="1"/>
</dbReference>
<dbReference type="Gene3D" id="3.30.40.10">
    <property type="entry name" value="Zinc/RING finger domain, C3HC4 (zinc finger)"/>
    <property type="match status" value="1"/>
</dbReference>
<dbReference type="Gene3D" id="2.30.30.380">
    <property type="entry name" value="Zn-finger domain of Sec23/24"/>
    <property type="match status" value="1"/>
</dbReference>
<dbReference type="InterPro" id="IPR028340">
    <property type="entry name" value="Mdm2"/>
</dbReference>
<dbReference type="InterPro" id="IPR044080">
    <property type="entry name" value="MDM2_mRING-HC-C2H2C4"/>
</dbReference>
<dbReference type="InterPro" id="IPR016495">
    <property type="entry name" value="p53_neg-reg_MDM_2/4"/>
</dbReference>
<dbReference type="InterPro" id="IPR036885">
    <property type="entry name" value="SWIB_MDM2_dom_sf"/>
</dbReference>
<dbReference type="InterPro" id="IPR003121">
    <property type="entry name" value="SWIB_MDM2_domain"/>
</dbReference>
<dbReference type="InterPro" id="IPR001876">
    <property type="entry name" value="Znf_RanBP2"/>
</dbReference>
<dbReference type="InterPro" id="IPR036443">
    <property type="entry name" value="Znf_RanBP2_sf"/>
</dbReference>
<dbReference type="InterPro" id="IPR001841">
    <property type="entry name" value="Znf_RING"/>
</dbReference>
<dbReference type="InterPro" id="IPR013083">
    <property type="entry name" value="Znf_RING/FYVE/PHD"/>
</dbReference>
<dbReference type="PANTHER" id="PTHR46858:SF13">
    <property type="entry name" value="E3 UBIQUITIN-PROTEIN LIGASE MDM2"/>
    <property type="match status" value="1"/>
</dbReference>
<dbReference type="PANTHER" id="PTHR46858">
    <property type="entry name" value="OS05G0521000 PROTEIN"/>
    <property type="match status" value="1"/>
</dbReference>
<dbReference type="Pfam" id="PF02201">
    <property type="entry name" value="SWIB"/>
    <property type="match status" value="1"/>
</dbReference>
<dbReference type="Pfam" id="PF13920">
    <property type="entry name" value="zf-C3HC4_3"/>
    <property type="match status" value="1"/>
</dbReference>
<dbReference type="Pfam" id="PF00641">
    <property type="entry name" value="Zn_ribbon_RanBP"/>
    <property type="match status" value="1"/>
</dbReference>
<dbReference type="PIRSF" id="PIRSF500700">
    <property type="entry name" value="MDM2"/>
    <property type="match status" value="1"/>
</dbReference>
<dbReference type="PIRSF" id="PIRSF006748">
    <property type="entry name" value="p53_MDM_2/4"/>
    <property type="match status" value="1"/>
</dbReference>
<dbReference type="SUPFAM" id="SSF90209">
    <property type="entry name" value="Ran binding protein zinc finger-like"/>
    <property type="match status" value="1"/>
</dbReference>
<dbReference type="SUPFAM" id="SSF57850">
    <property type="entry name" value="RING/U-box"/>
    <property type="match status" value="1"/>
</dbReference>
<dbReference type="SUPFAM" id="SSF47592">
    <property type="entry name" value="SWIB/MDM2 domain"/>
    <property type="match status" value="2"/>
</dbReference>
<dbReference type="PROSITE" id="PS51925">
    <property type="entry name" value="SWIB_MDM2"/>
    <property type="match status" value="1"/>
</dbReference>
<dbReference type="PROSITE" id="PS01358">
    <property type="entry name" value="ZF_RANBP2_1"/>
    <property type="match status" value="1"/>
</dbReference>
<dbReference type="PROSITE" id="PS50199">
    <property type="entry name" value="ZF_RANBP2_2"/>
    <property type="match status" value="1"/>
</dbReference>
<dbReference type="PROSITE" id="PS50089">
    <property type="entry name" value="ZF_RING_2"/>
    <property type="match status" value="1"/>
</dbReference>
<organism>
    <name type="scientific">Mus musculus</name>
    <name type="common">Mouse</name>
    <dbReference type="NCBI Taxonomy" id="10090"/>
    <lineage>
        <taxon>Eukaryota</taxon>
        <taxon>Metazoa</taxon>
        <taxon>Chordata</taxon>
        <taxon>Craniata</taxon>
        <taxon>Vertebrata</taxon>
        <taxon>Euteleostomi</taxon>
        <taxon>Mammalia</taxon>
        <taxon>Eutheria</taxon>
        <taxon>Euarchontoglires</taxon>
        <taxon>Glires</taxon>
        <taxon>Rodentia</taxon>
        <taxon>Myomorpha</taxon>
        <taxon>Muroidea</taxon>
        <taxon>Muridae</taxon>
        <taxon>Murinae</taxon>
        <taxon>Mus</taxon>
        <taxon>Mus</taxon>
    </lineage>
</organism>
<protein>
    <recommendedName>
        <fullName>E3 ubiquitin-protein ligase Mdm2</fullName>
        <ecNumber evidence="11">2.3.2.27</ecNumber>
    </recommendedName>
    <alternativeName>
        <fullName>Double minute 2 protein</fullName>
    </alternativeName>
    <alternativeName>
        <fullName>Oncoprotein Mdm2</fullName>
    </alternativeName>
    <alternativeName>
        <fullName evidence="18">RING-type E3 ubiquitin transferase Mdm2</fullName>
    </alternativeName>
    <alternativeName>
        <fullName>p53-binding protein Mdm2</fullName>
    </alternativeName>
</protein>
<keyword id="KW-0024">Alternative initiation</keyword>
<keyword id="KW-0025">Alternative splicing</keyword>
<keyword id="KW-0053">Apoptosis</keyword>
<keyword id="KW-0963">Cytoplasm</keyword>
<keyword id="KW-0479">Metal-binding</keyword>
<keyword id="KW-0539">Nucleus</keyword>
<keyword id="KW-0597">Phosphoprotein</keyword>
<keyword id="KW-0656">Proto-oncogene</keyword>
<keyword id="KW-1185">Reference proteome</keyword>
<keyword id="KW-0808">Transferase</keyword>
<keyword id="KW-0832">Ubl conjugation</keyword>
<keyword id="KW-0833">Ubl conjugation pathway</keyword>
<keyword id="KW-0862">Zinc</keyword>
<keyword id="KW-0863">Zinc-finger</keyword>
<proteinExistence type="evidence at protein level"/>
<accession>P23804</accession>
<accession>Q61040</accession>
<accession>Q64330</accession>
<accession>Q91XK7</accession>
<feature type="chain" id="PRO_0000018650" description="E3 ubiquitin-protein ligase Mdm2">
    <location>
        <begin position="1"/>
        <end position="489"/>
    </location>
</feature>
<feature type="domain" description="SWIB/MDM2" evidence="6">
    <location>
        <begin position="26"/>
        <end position="109"/>
    </location>
</feature>
<feature type="zinc finger region" description="RanBP2-type" evidence="5">
    <location>
        <begin position="297"/>
        <end position="326"/>
    </location>
</feature>
<feature type="zinc finger region" description="RING-type" evidence="4">
    <location>
        <begin position="436"/>
        <end position="477"/>
    </location>
</feature>
<feature type="region of interest" description="Necessary for interaction with USP2" evidence="1">
    <location>
        <begin position="1"/>
        <end position="110"/>
    </location>
</feature>
<feature type="region of interest" description="Sufficient to promote the mitochondrial pathway of apoptosis" evidence="2">
    <location>
        <begin position="1"/>
        <end position="101"/>
    </location>
</feature>
<feature type="region of interest" description="Disordered" evidence="7">
    <location>
        <begin position="1"/>
        <end position="22"/>
    </location>
</feature>
<feature type="region of interest" description="Disordered" evidence="7">
    <location>
        <begin position="114"/>
        <end position="183"/>
    </location>
</feature>
<feature type="region of interest" description="Interaction with PYHIN1 and necessary for interaction with RFFL and RNF34" evidence="2">
    <location>
        <begin position="147"/>
        <end position="228"/>
    </location>
</feature>
<feature type="region of interest" description="Interaction with MTBP" evidence="9">
    <location>
        <begin position="167"/>
        <end position="304"/>
    </location>
</feature>
<feature type="region of interest" description="Disordered" evidence="7">
    <location>
        <begin position="197"/>
        <end position="235"/>
    </location>
</feature>
<feature type="region of interest" description="ARF-binding">
    <location>
        <begin position="208"/>
        <end position="302"/>
    </location>
</feature>
<feature type="region of interest" description="Interaction with USP7" evidence="1">
    <location>
        <begin position="221"/>
        <end position="230"/>
    </location>
</feature>
<feature type="region of interest" description="Region II">
    <location>
        <begin position="240"/>
        <end position="329"/>
    </location>
</feature>
<feature type="region of interest" description="Disordered" evidence="7">
    <location>
        <begin position="250"/>
        <end position="271"/>
    </location>
</feature>
<feature type="region of interest" description="Necessary for interaction with USP2" evidence="1">
    <location>
        <begin position="274"/>
        <end position="489"/>
    </location>
</feature>
<feature type="region of interest" description="Disordered" evidence="7">
    <location>
        <begin position="342"/>
        <end position="426"/>
    </location>
</feature>
<feature type="short sequence motif" description="Nuclear localization signal" evidence="3">
    <location>
        <begin position="176"/>
        <end position="182"/>
    </location>
</feature>
<feature type="short sequence motif" description="Nuclear export signal">
    <location>
        <begin position="183"/>
        <end position="195"/>
    </location>
</feature>
<feature type="short sequence motif" description="Nucleolar localization signal" evidence="3">
    <location>
        <begin position="464"/>
        <end position="471"/>
    </location>
</feature>
<feature type="compositionally biased region" description="Basic and acidic residues" evidence="7">
    <location>
        <begin position="121"/>
        <end position="145"/>
    </location>
</feature>
<feature type="compositionally biased region" description="Low complexity" evidence="7">
    <location>
        <begin position="146"/>
        <end position="156"/>
    </location>
</feature>
<feature type="compositionally biased region" description="Low complexity" evidence="7">
    <location>
        <begin position="200"/>
        <end position="216"/>
    </location>
</feature>
<feature type="compositionally biased region" description="Basic and acidic residues" evidence="7">
    <location>
        <begin position="218"/>
        <end position="232"/>
    </location>
</feature>
<feature type="compositionally biased region" description="Acidic residues" evidence="7">
    <location>
        <begin position="250"/>
        <end position="259"/>
    </location>
</feature>
<feature type="compositionally biased region" description="Basic and acidic residues" evidence="7">
    <location>
        <begin position="358"/>
        <end position="372"/>
    </location>
</feature>
<feature type="compositionally biased region" description="Low complexity" evidence="7">
    <location>
        <begin position="393"/>
        <end position="408"/>
    </location>
</feature>
<feature type="compositionally biased region" description="Basic and acidic residues" evidence="7">
    <location>
        <begin position="409"/>
        <end position="423"/>
    </location>
</feature>
<feature type="binding site" evidence="2">
    <location>
        <position position="303"/>
    </location>
    <ligand>
        <name>Zn(2+)</name>
        <dbReference type="ChEBI" id="CHEBI:29105"/>
    </ligand>
</feature>
<feature type="binding site" evidence="2">
    <location>
        <position position="306"/>
    </location>
    <ligand>
        <name>Zn(2+)</name>
        <dbReference type="ChEBI" id="CHEBI:29105"/>
    </ligand>
</feature>
<feature type="binding site" evidence="2">
    <location>
        <position position="317"/>
    </location>
    <ligand>
        <name>Zn(2+)</name>
        <dbReference type="ChEBI" id="CHEBI:29105"/>
    </ligand>
</feature>
<feature type="binding site" evidence="2">
    <location>
        <position position="320"/>
    </location>
    <ligand>
        <name>Zn(2+)</name>
        <dbReference type="ChEBI" id="CHEBI:29105"/>
    </ligand>
</feature>
<feature type="modified residue" description="Phosphoserine; by SGK1" evidence="2">
    <location>
        <position position="163"/>
    </location>
</feature>
<feature type="modified residue" description="Phosphoserine" evidence="19">
    <location>
        <position position="183"/>
    </location>
</feature>
<feature type="modified residue" description="Phosphoserine" evidence="2">
    <location>
        <position position="238"/>
    </location>
</feature>
<feature type="modified residue" description="Phosphoserine" evidence="2">
    <location>
        <position position="240"/>
    </location>
</feature>
<feature type="modified residue" description="Phosphoserine" evidence="2">
    <location>
        <position position="244"/>
    </location>
</feature>
<feature type="modified residue" description="Phosphoserine" evidence="2">
    <location>
        <position position="258"/>
    </location>
</feature>
<feature type="modified residue" description="Phosphoserine" evidence="2">
    <location>
        <position position="260"/>
    </location>
</feature>
<feature type="modified residue" description="Phosphoserine; by ATM" evidence="2">
    <location>
        <position position="394"/>
    </location>
</feature>
<feature type="modified residue" description="Phosphoserine; by ATM" evidence="2">
    <location>
        <position position="406"/>
    </location>
</feature>
<feature type="modified residue" description="Phosphothreonine; by ATM" evidence="2">
    <location>
        <position position="417"/>
    </location>
</feature>
<feature type="modified residue" description="Phosphoserine; by ATM" evidence="2">
    <location>
        <position position="423"/>
    </location>
</feature>
<feature type="modified residue" description="Phosphoserine; by ATM" evidence="2">
    <location>
        <position position="427"/>
    </location>
</feature>
<feature type="splice variant" id="VSP_003215" description="In isoform Mdm2-p76." evidence="18">
    <location>
        <begin position="1"/>
        <end position="49"/>
    </location>
</feature>
<feature type="mutagenesis site" description="Reduced interaction with NDUFS1, ROS production and apoptosis." evidence="17">
    <original>G</original>
    <variation>I</variation>
    <location>
        <position position="58"/>
    </location>
</feature>
<feature type="sequence conflict" description="In Ref. 1; CAA41684." evidence="18" ref="1">
    <original>S</original>
    <variation>T</variation>
    <location>
        <position position="203"/>
    </location>
</feature>
<feature type="sequence conflict" description="In Ref. 1; CAA41684." evidence="18" ref="1">
    <original>D</original>
    <variation>H</variation>
    <location>
        <position position="419"/>
    </location>
</feature>
<feature type="sequence conflict" description="In Ref. 1; CAA41684 and 2; AAA91167." evidence="18" ref="1 2">
    <original>T</original>
    <variation>S</variation>
    <location>
        <position position="486"/>
    </location>
</feature>